<sequence>MAANKSYKSYFLDPLWGNNQPLIAILGICSALAVTTTVNTAITMGLAVSFVTGCSSFFVSLLRKATPDSVRMITQLIIISLFVIVIDQFLKAFFFTISKTLSVFVGLIITNCIVMGRAESLARNVPPIPAFLDGLASGLGYGWVLVTVSIVREFFGFGTILGLQLIPKCFYASETHPDGYENFGLMVLAPSAFFLLGIMIWGVNILRSKKAKR</sequence>
<gene>
    <name evidence="1" type="primary">nqrD</name>
    <name type="ordered locus">CCA_00363</name>
</gene>
<protein>
    <recommendedName>
        <fullName evidence="1">Na(+)-translocating NADH-quinone reductase subunit D</fullName>
        <shortName evidence="1">Na(+)-NQR subunit D</shortName>
        <shortName evidence="1">Na(+)-translocating NQR subunit D</shortName>
        <ecNumber evidence="1">7.2.1.1</ecNumber>
    </recommendedName>
    <alternativeName>
        <fullName evidence="1">NQR complex subunit D</fullName>
    </alternativeName>
    <alternativeName>
        <fullName evidence="1">NQR-1 subunit D</fullName>
    </alternativeName>
</protein>
<comment type="function">
    <text evidence="1">NQR complex catalyzes the reduction of ubiquinone-1 to ubiquinol by two successive reactions, coupled with the transport of Na(+) ions from the cytoplasm to the periplasm. NqrA to NqrE are probably involved in the second step, the conversion of ubisemiquinone to ubiquinol.</text>
</comment>
<comment type="catalytic activity">
    <reaction evidence="1">
        <text>a ubiquinone + n Na(+)(in) + NADH + H(+) = a ubiquinol + n Na(+)(out) + NAD(+)</text>
        <dbReference type="Rhea" id="RHEA:47748"/>
        <dbReference type="Rhea" id="RHEA-COMP:9565"/>
        <dbReference type="Rhea" id="RHEA-COMP:9566"/>
        <dbReference type="ChEBI" id="CHEBI:15378"/>
        <dbReference type="ChEBI" id="CHEBI:16389"/>
        <dbReference type="ChEBI" id="CHEBI:17976"/>
        <dbReference type="ChEBI" id="CHEBI:29101"/>
        <dbReference type="ChEBI" id="CHEBI:57540"/>
        <dbReference type="ChEBI" id="CHEBI:57945"/>
        <dbReference type="EC" id="7.2.1.1"/>
    </reaction>
</comment>
<comment type="subunit">
    <text evidence="1">Composed of six subunits; NqrA, NqrB, NqrC, NqrD, NqrE and NqrF.</text>
</comment>
<comment type="subcellular location">
    <subcellularLocation>
        <location evidence="1">Cell inner membrane</location>
        <topology evidence="1">Multi-pass membrane protein</topology>
    </subcellularLocation>
</comment>
<comment type="similarity">
    <text evidence="1">Belongs to the NqrDE/RnfAE family.</text>
</comment>
<organism>
    <name type="scientific">Chlamydia caviae (strain ATCC VR-813 / DSM 19441 / 03DC25 / GPIC)</name>
    <name type="common">Chlamydophila caviae</name>
    <dbReference type="NCBI Taxonomy" id="227941"/>
    <lineage>
        <taxon>Bacteria</taxon>
        <taxon>Pseudomonadati</taxon>
        <taxon>Chlamydiota</taxon>
        <taxon>Chlamydiia</taxon>
        <taxon>Chlamydiales</taxon>
        <taxon>Chlamydiaceae</taxon>
        <taxon>Chlamydia/Chlamydophila group</taxon>
        <taxon>Chlamydia</taxon>
    </lineage>
</organism>
<proteinExistence type="inferred from homology"/>
<dbReference type="EC" id="7.2.1.1" evidence="1"/>
<dbReference type="EMBL" id="AE015925">
    <property type="protein sequence ID" value="AAP05111.1"/>
    <property type="molecule type" value="Genomic_DNA"/>
</dbReference>
<dbReference type="RefSeq" id="WP_011006328.1">
    <property type="nucleotide sequence ID" value="NC_003361.3"/>
</dbReference>
<dbReference type="SMR" id="Q823P4"/>
<dbReference type="STRING" id="227941.CCA_00363"/>
<dbReference type="KEGG" id="cca:CCA_00363"/>
<dbReference type="eggNOG" id="COG1347">
    <property type="taxonomic scope" value="Bacteria"/>
</dbReference>
<dbReference type="HOGENOM" id="CLU_046659_1_1_0"/>
<dbReference type="OrthoDB" id="9790976at2"/>
<dbReference type="Proteomes" id="UP000002193">
    <property type="component" value="Chromosome"/>
</dbReference>
<dbReference type="GO" id="GO:0005886">
    <property type="term" value="C:plasma membrane"/>
    <property type="evidence" value="ECO:0007669"/>
    <property type="project" value="UniProtKB-SubCell"/>
</dbReference>
<dbReference type="GO" id="GO:0016655">
    <property type="term" value="F:oxidoreductase activity, acting on NAD(P)H, quinone or similar compound as acceptor"/>
    <property type="evidence" value="ECO:0007669"/>
    <property type="project" value="UniProtKB-UniRule"/>
</dbReference>
<dbReference type="GO" id="GO:0006814">
    <property type="term" value="P:sodium ion transport"/>
    <property type="evidence" value="ECO:0007669"/>
    <property type="project" value="UniProtKB-UniRule"/>
</dbReference>
<dbReference type="HAMAP" id="MF_00428">
    <property type="entry name" value="NqrD"/>
    <property type="match status" value="1"/>
</dbReference>
<dbReference type="InterPro" id="IPR011292">
    <property type="entry name" value="NqrD"/>
</dbReference>
<dbReference type="InterPro" id="IPR003667">
    <property type="entry name" value="NqrDE/RnfAE"/>
</dbReference>
<dbReference type="NCBIfam" id="TIGR01939">
    <property type="entry name" value="nqrD"/>
    <property type="match status" value="1"/>
</dbReference>
<dbReference type="NCBIfam" id="NF006777">
    <property type="entry name" value="PRK09292.1"/>
    <property type="match status" value="1"/>
</dbReference>
<dbReference type="NCBIfam" id="NF009070">
    <property type="entry name" value="PRK12405.1"/>
    <property type="match status" value="1"/>
</dbReference>
<dbReference type="PANTHER" id="PTHR30586">
    <property type="entry name" value="ELECTRON TRANSPORT COMPLEX PROTEIN RNFE"/>
    <property type="match status" value="1"/>
</dbReference>
<dbReference type="PANTHER" id="PTHR30586:SF1">
    <property type="entry name" value="NA(+)-TRANSLOCATING NADH-QUINONE REDUCTASE SUBUNIT D"/>
    <property type="match status" value="1"/>
</dbReference>
<dbReference type="Pfam" id="PF02508">
    <property type="entry name" value="Rnf-Nqr"/>
    <property type="match status" value="1"/>
</dbReference>
<dbReference type="PIRSF" id="PIRSF006102">
    <property type="entry name" value="NQR_DE"/>
    <property type="match status" value="1"/>
</dbReference>
<feature type="chain" id="PRO_0000214229" description="Na(+)-translocating NADH-quinone reductase subunit D">
    <location>
        <begin position="1"/>
        <end position="213"/>
    </location>
</feature>
<feature type="transmembrane region" description="Helical" evidence="1">
    <location>
        <begin position="21"/>
        <end position="41"/>
    </location>
</feature>
<feature type="transmembrane region" description="Helical" evidence="1">
    <location>
        <begin position="42"/>
        <end position="62"/>
    </location>
</feature>
<feature type="transmembrane region" description="Helical" evidence="1">
    <location>
        <begin position="69"/>
        <end position="86"/>
    </location>
</feature>
<feature type="transmembrane region" description="Helical" evidence="1">
    <location>
        <begin position="101"/>
        <end position="121"/>
    </location>
</feature>
<feature type="transmembrane region" description="Helical" evidence="1">
    <location>
        <begin position="131"/>
        <end position="151"/>
    </location>
</feature>
<feature type="transmembrane region" description="Helical" evidence="1">
    <location>
        <begin position="183"/>
        <end position="203"/>
    </location>
</feature>
<name>NQRD_CHLCV</name>
<accession>Q823P4</accession>
<reference key="1">
    <citation type="journal article" date="2003" name="Nucleic Acids Res.">
        <title>Genome sequence of Chlamydophila caviae (Chlamydia psittaci GPIC): examining the role of niche-specific genes in the evolution of the Chlamydiaceae.</title>
        <authorList>
            <person name="Read T.D."/>
            <person name="Myers G.S.A."/>
            <person name="Brunham R.C."/>
            <person name="Nelson W.C."/>
            <person name="Paulsen I.T."/>
            <person name="Heidelberg J.F."/>
            <person name="Holtzapple E.K."/>
            <person name="Khouri H.M."/>
            <person name="Federova N.B."/>
            <person name="Carty H.A."/>
            <person name="Umayam L.A."/>
            <person name="Haft D.H."/>
            <person name="Peterson J.D."/>
            <person name="Beanan M.J."/>
            <person name="White O."/>
            <person name="Salzberg S.L."/>
            <person name="Hsia R.-C."/>
            <person name="McClarty G."/>
            <person name="Rank R.G."/>
            <person name="Bavoil P.M."/>
            <person name="Fraser C.M."/>
        </authorList>
    </citation>
    <scope>NUCLEOTIDE SEQUENCE [LARGE SCALE GENOMIC DNA]</scope>
    <source>
        <strain>ATCC VR-813 / DSM 19441 / 03DC25 / GPIC</strain>
    </source>
</reference>
<evidence type="ECO:0000255" key="1">
    <source>
        <dbReference type="HAMAP-Rule" id="MF_00428"/>
    </source>
</evidence>
<keyword id="KW-0997">Cell inner membrane</keyword>
<keyword id="KW-1003">Cell membrane</keyword>
<keyword id="KW-0406">Ion transport</keyword>
<keyword id="KW-0472">Membrane</keyword>
<keyword id="KW-0520">NAD</keyword>
<keyword id="KW-0915">Sodium</keyword>
<keyword id="KW-0739">Sodium transport</keyword>
<keyword id="KW-1278">Translocase</keyword>
<keyword id="KW-0812">Transmembrane</keyword>
<keyword id="KW-1133">Transmembrane helix</keyword>
<keyword id="KW-0813">Transport</keyword>
<keyword id="KW-0830">Ubiquinone</keyword>